<keyword id="KW-0687">Ribonucleoprotein</keyword>
<keyword id="KW-0689">Ribosomal protein</keyword>
<evidence type="ECO:0000255" key="1">
    <source>
        <dbReference type="HAMAP-Rule" id="MF_00374"/>
    </source>
</evidence>
<evidence type="ECO:0000305" key="2"/>
<sequence>MKAKELREKSVEELNTELLNLLREQFNLRMQAASGQLQQSHLLKQVRRDVARVKTLLTEKAGA</sequence>
<accession>A9MSZ0</accession>
<feature type="chain" id="PRO_1000079902" description="Large ribosomal subunit protein uL29">
    <location>
        <begin position="1"/>
        <end position="63"/>
    </location>
</feature>
<gene>
    <name evidence="1" type="primary">rpmC</name>
    <name type="ordered locus">SPAB_04273</name>
</gene>
<dbReference type="EMBL" id="CP000886">
    <property type="protein sequence ID" value="ABX69590.1"/>
    <property type="molecule type" value="Genomic_DNA"/>
</dbReference>
<dbReference type="RefSeq" id="WP_000644742.1">
    <property type="nucleotide sequence ID" value="NC_010102.1"/>
</dbReference>
<dbReference type="SMR" id="A9MSZ0"/>
<dbReference type="GeneID" id="93035739"/>
<dbReference type="KEGG" id="spq:SPAB_04273"/>
<dbReference type="PATRIC" id="fig|1016998.12.peg.4019"/>
<dbReference type="HOGENOM" id="CLU_158491_1_2_6"/>
<dbReference type="BioCyc" id="SENT1016998:SPAB_RS17395-MONOMER"/>
<dbReference type="Proteomes" id="UP000008556">
    <property type="component" value="Chromosome"/>
</dbReference>
<dbReference type="GO" id="GO:0022625">
    <property type="term" value="C:cytosolic large ribosomal subunit"/>
    <property type="evidence" value="ECO:0007669"/>
    <property type="project" value="TreeGrafter"/>
</dbReference>
<dbReference type="GO" id="GO:0003735">
    <property type="term" value="F:structural constituent of ribosome"/>
    <property type="evidence" value="ECO:0007669"/>
    <property type="project" value="InterPro"/>
</dbReference>
<dbReference type="GO" id="GO:0006412">
    <property type="term" value="P:translation"/>
    <property type="evidence" value="ECO:0007669"/>
    <property type="project" value="UniProtKB-UniRule"/>
</dbReference>
<dbReference type="CDD" id="cd00427">
    <property type="entry name" value="Ribosomal_L29_HIP"/>
    <property type="match status" value="1"/>
</dbReference>
<dbReference type="Gene3D" id="6.10.140.1970">
    <property type="match status" value="1"/>
</dbReference>
<dbReference type="HAMAP" id="MF_00374">
    <property type="entry name" value="Ribosomal_uL29"/>
    <property type="match status" value="1"/>
</dbReference>
<dbReference type="InterPro" id="IPR050063">
    <property type="entry name" value="Ribosomal_protein_uL29"/>
</dbReference>
<dbReference type="InterPro" id="IPR001854">
    <property type="entry name" value="Ribosomal_uL29"/>
</dbReference>
<dbReference type="InterPro" id="IPR018254">
    <property type="entry name" value="Ribosomal_uL29_CS"/>
</dbReference>
<dbReference type="InterPro" id="IPR036049">
    <property type="entry name" value="Ribosomal_uL29_sf"/>
</dbReference>
<dbReference type="NCBIfam" id="TIGR00012">
    <property type="entry name" value="L29"/>
    <property type="match status" value="1"/>
</dbReference>
<dbReference type="PANTHER" id="PTHR10916">
    <property type="entry name" value="60S RIBOSOMAL PROTEIN L35/50S RIBOSOMAL PROTEIN L29"/>
    <property type="match status" value="1"/>
</dbReference>
<dbReference type="PANTHER" id="PTHR10916:SF0">
    <property type="entry name" value="LARGE RIBOSOMAL SUBUNIT PROTEIN UL29C"/>
    <property type="match status" value="1"/>
</dbReference>
<dbReference type="Pfam" id="PF00831">
    <property type="entry name" value="Ribosomal_L29"/>
    <property type="match status" value="1"/>
</dbReference>
<dbReference type="SUPFAM" id="SSF46561">
    <property type="entry name" value="Ribosomal protein L29 (L29p)"/>
    <property type="match status" value="1"/>
</dbReference>
<dbReference type="PROSITE" id="PS00579">
    <property type="entry name" value="RIBOSOMAL_L29"/>
    <property type="match status" value="1"/>
</dbReference>
<reference key="1">
    <citation type="submission" date="2007-11" db="EMBL/GenBank/DDBJ databases">
        <authorList>
            <consortium name="The Salmonella enterica serovar Paratyphi B Genome Sequencing Project"/>
            <person name="McClelland M."/>
            <person name="Sanderson E.K."/>
            <person name="Porwollik S."/>
            <person name="Spieth J."/>
            <person name="Clifton W.S."/>
            <person name="Fulton R."/>
            <person name="Cordes M."/>
            <person name="Wollam A."/>
            <person name="Shah N."/>
            <person name="Pepin K."/>
            <person name="Bhonagiri V."/>
            <person name="Nash W."/>
            <person name="Johnson M."/>
            <person name="Thiruvilangam P."/>
            <person name="Wilson R."/>
        </authorList>
    </citation>
    <scope>NUCLEOTIDE SEQUENCE [LARGE SCALE GENOMIC DNA]</scope>
    <source>
        <strain>ATCC BAA-1250 / SPB7</strain>
    </source>
</reference>
<name>RL29_SALPB</name>
<proteinExistence type="inferred from homology"/>
<comment type="similarity">
    <text evidence="1">Belongs to the universal ribosomal protein uL29 family.</text>
</comment>
<organism>
    <name type="scientific">Salmonella paratyphi B (strain ATCC BAA-1250 / SPB7)</name>
    <dbReference type="NCBI Taxonomy" id="1016998"/>
    <lineage>
        <taxon>Bacteria</taxon>
        <taxon>Pseudomonadati</taxon>
        <taxon>Pseudomonadota</taxon>
        <taxon>Gammaproteobacteria</taxon>
        <taxon>Enterobacterales</taxon>
        <taxon>Enterobacteriaceae</taxon>
        <taxon>Salmonella</taxon>
    </lineage>
</organism>
<protein>
    <recommendedName>
        <fullName evidence="1">Large ribosomal subunit protein uL29</fullName>
    </recommendedName>
    <alternativeName>
        <fullName evidence="2">50S ribosomal protein L29</fullName>
    </alternativeName>
</protein>